<gene>
    <name evidence="1" type="primary">mltC</name>
    <name type="ordered locus">SARI_04534</name>
</gene>
<organism>
    <name type="scientific">Salmonella arizonae (strain ATCC BAA-731 / CDC346-86 / RSK2980)</name>
    <dbReference type="NCBI Taxonomy" id="41514"/>
    <lineage>
        <taxon>Bacteria</taxon>
        <taxon>Pseudomonadati</taxon>
        <taxon>Pseudomonadota</taxon>
        <taxon>Gammaproteobacteria</taxon>
        <taxon>Enterobacterales</taxon>
        <taxon>Enterobacteriaceae</taxon>
        <taxon>Salmonella</taxon>
    </lineage>
</organism>
<evidence type="ECO:0000255" key="1">
    <source>
        <dbReference type="HAMAP-Rule" id="MF_01616"/>
    </source>
</evidence>
<evidence type="ECO:0000305" key="2"/>
<reference key="1">
    <citation type="submission" date="2007-11" db="EMBL/GenBank/DDBJ databases">
        <authorList>
            <consortium name="The Salmonella enterica serovar Arizonae Genome Sequencing Project"/>
            <person name="McClelland M."/>
            <person name="Sanderson E.K."/>
            <person name="Porwollik S."/>
            <person name="Spieth J."/>
            <person name="Clifton W.S."/>
            <person name="Fulton R."/>
            <person name="Chunyan W."/>
            <person name="Wollam A."/>
            <person name="Shah N."/>
            <person name="Pepin K."/>
            <person name="Bhonagiri V."/>
            <person name="Nash W."/>
            <person name="Johnson M."/>
            <person name="Thiruvilangam P."/>
            <person name="Wilson R."/>
        </authorList>
    </citation>
    <scope>NUCLEOTIDE SEQUENCE [LARGE SCALE GENOMIC DNA]</scope>
    <source>
        <strain>ATCC BAA-731 / CDC346-86 / RSK2980</strain>
    </source>
</reference>
<keyword id="KW-0998">Cell outer membrane</keyword>
<keyword id="KW-0961">Cell wall biogenesis/degradation</keyword>
<keyword id="KW-0449">Lipoprotein</keyword>
<keyword id="KW-0456">Lyase</keyword>
<keyword id="KW-0472">Membrane</keyword>
<keyword id="KW-0564">Palmitate</keyword>
<keyword id="KW-1185">Reference proteome</keyword>
<keyword id="KW-0732">Signal</keyword>
<feature type="signal peptide" evidence="1">
    <location>
        <begin position="1"/>
        <end position="16"/>
    </location>
</feature>
<feature type="chain" id="PRO_0000335585" description="Membrane-bound lytic murein transglycosylase C">
    <location>
        <begin position="17"/>
        <end position="360"/>
    </location>
</feature>
<feature type="lipid moiety-binding region" description="N-palmitoyl cysteine" evidence="1">
    <location>
        <position position="17"/>
    </location>
</feature>
<feature type="lipid moiety-binding region" description="S-diacylglycerol cysteine" evidence="1">
    <location>
        <position position="17"/>
    </location>
</feature>
<sequence length="360" mass="40257">MKKLLALAVIAPLLISCSSSTKKGETYNEAWVKDTNGFDILMGQFANNIENLWGYKEVLIAGPKDYVKYTDQFQTRSHINFDDGTITVETIAGTEPTAHLRRAIIKTLLMGDDPTSVDLYSDVDDIKISKEPFLYGQVVDNTGQPIRWEGRATTFADYLLKTRLKSRSNGLRIIYSVTINLVPNHLDKRAHKYIGMVRQASRKYGVDESLILAIMQTESSFNPYAVSHADALGLMQVVQHSAGKDVFRSQGKSGIPSRNFLFDPASNIDTGTAYLAMLNNVYLSGIENPTSRRYAVITAYNGGAGSVLRVFSNDKIQAANMINRMSPGDVYQILTTRHPSAESRRYLYKVNSAQRAYRRR</sequence>
<dbReference type="EC" id="4.2.2.n1" evidence="1"/>
<dbReference type="EMBL" id="CP000880">
    <property type="protein sequence ID" value="ABX24307.1"/>
    <property type="status" value="ALT_INIT"/>
    <property type="molecule type" value="Genomic_DNA"/>
</dbReference>
<dbReference type="SMR" id="A9MQR3"/>
<dbReference type="STRING" id="41514.SARI_04534"/>
<dbReference type="CAZy" id="GH23">
    <property type="family name" value="Glycoside Hydrolase Family 23"/>
</dbReference>
<dbReference type="KEGG" id="ses:SARI_04534"/>
<dbReference type="HOGENOM" id="CLU_044583_0_0_6"/>
<dbReference type="Proteomes" id="UP000002084">
    <property type="component" value="Chromosome"/>
</dbReference>
<dbReference type="GO" id="GO:0009279">
    <property type="term" value="C:cell outer membrane"/>
    <property type="evidence" value="ECO:0007669"/>
    <property type="project" value="UniProtKB-SubCell"/>
</dbReference>
<dbReference type="GO" id="GO:0016798">
    <property type="term" value="F:hydrolase activity, acting on glycosyl bonds"/>
    <property type="evidence" value="ECO:0007669"/>
    <property type="project" value="InterPro"/>
</dbReference>
<dbReference type="GO" id="GO:0008933">
    <property type="term" value="F:peptidoglycan lytic transglycosylase activity"/>
    <property type="evidence" value="ECO:0007669"/>
    <property type="project" value="UniProtKB-UniRule"/>
</dbReference>
<dbReference type="GO" id="GO:0016998">
    <property type="term" value="P:cell wall macromolecule catabolic process"/>
    <property type="evidence" value="ECO:0007669"/>
    <property type="project" value="UniProtKB-UniRule"/>
</dbReference>
<dbReference type="GO" id="GO:0071555">
    <property type="term" value="P:cell wall organization"/>
    <property type="evidence" value="ECO:0007669"/>
    <property type="project" value="UniProtKB-KW"/>
</dbReference>
<dbReference type="GO" id="GO:0000270">
    <property type="term" value="P:peptidoglycan metabolic process"/>
    <property type="evidence" value="ECO:0007669"/>
    <property type="project" value="InterPro"/>
</dbReference>
<dbReference type="CDD" id="cd16893">
    <property type="entry name" value="LT_MltC_MltE"/>
    <property type="match status" value="1"/>
</dbReference>
<dbReference type="FunFam" id="1.10.530.10:FF:000002">
    <property type="entry name" value="Membrane-bound lytic murein transglycosylase C"/>
    <property type="match status" value="1"/>
</dbReference>
<dbReference type="Gene3D" id="1.10.530.10">
    <property type="match status" value="1"/>
</dbReference>
<dbReference type="HAMAP" id="MF_01616">
    <property type="entry name" value="MltC"/>
    <property type="match status" value="1"/>
</dbReference>
<dbReference type="InterPro" id="IPR023346">
    <property type="entry name" value="Lysozyme-like_dom_sf"/>
</dbReference>
<dbReference type="InterPro" id="IPR023664">
    <property type="entry name" value="Murein_transglycosylaseC"/>
</dbReference>
<dbReference type="InterPro" id="IPR024570">
    <property type="entry name" value="Murein_transglycosylaseC_N"/>
</dbReference>
<dbReference type="InterPro" id="IPR000189">
    <property type="entry name" value="Transglyc_AS"/>
</dbReference>
<dbReference type="InterPro" id="IPR008258">
    <property type="entry name" value="Transglycosylase_SLT_dom_1"/>
</dbReference>
<dbReference type="NCBIfam" id="NF008670">
    <property type="entry name" value="PRK11671.1"/>
    <property type="match status" value="1"/>
</dbReference>
<dbReference type="PANTHER" id="PTHR37423:SF2">
    <property type="entry name" value="MEMBRANE-BOUND LYTIC MUREIN TRANSGLYCOSYLASE C"/>
    <property type="match status" value="1"/>
</dbReference>
<dbReference type="PANTHER" id="PTHR37423">
    <property type="entry name" value="SOLUBLE LYTIC MUREIN TRANSGLYCOSYLASE-RELATED"/>
    <property type="match status" value="1"/>
</dbReference>
<dbReference type="Pfam" id="PF11873">
    <property type="entry name" value="Mltc_N"/>
    <property type="match status" value="1"/>
</dbReference>
<dbReference type="Pfam" id="PF01464">
    <property type="entry name" value="SLT"/>
    <property type="match status" value="1"/>
</dbReference>
<dbReference type="SUPFAM" id="SSF53955">
    <property type="entry name" value="Lysozyme-like"/>
    <property type="match status" value="1"/>
</dbReference>
<dbReference type="PROSITE" id="PS51257">
    <property type="entry name" value="PROKAR_LIPOPROTEIN"/>
    <property type="match status" value="1"/>
</dbReference>
<dbReference type="PROSITE" id="PS00922">
    <property type="entry name" value="TRANSGLYCOSYLASE"/>
    <property type="match status" value="1"/>
</dbReference>
<protein>
    <recommendedName>
        <fullName evidence="1">Membrane-bound lytic murein transglycosylase C</fullName>
        <ecNumber evidence="1">4.2.2.n1</ecNumber>
    </recommendedName>
    <alternativeName>
        <fullName evidence="1">Murein lyase C</fullName>
    </alternativeName>
</protein>
<name>MLTC_SALAR</name>
<accession>A9MQR3</accession>
<proteinExistence type="inferred from homology"/>
<comment type="function">
    <text evidence="1">Murein-degrading enzyme. May play a role in recycling of muropeptides during cell elongation and/or cell division.</text>
</comment>
<comment type="catalytic activity">
    <reaction evidence="1">
        <text>Exolytic cleavage of the (1-&gt;4)-beta-glycosidic linkage between N-acetylmuramic acid (MurNAc) and N-acetylglucosamine (GlcNAc) residues in peptidoglycan, from either the reducing or the non-reducing ends of the peptidoglycan chains, with concomitant formation of a 1,6-anhydrobond in the MurNAc residue.</text>
        <dbReference type="EC" id="4.2.2.n1"/>
    </reaction>
</comment>
<comment type="subcellular location">
    <subcellularLocation>
        <location evidence="1">Cell outer membrane</location>
        <topology evidence="1">Lipid-anchor</topology>
    </subcellularLocation>
</comment>
<comment type="similarity">
    <text evidence="1">Belongs to the transglycosylase Slt family.</text>
</comment>
<comment type="sequence caution" evidence="2">
    <conflict type="erroneous initiation">
        <sequence resource="EMBL-CDS" id="ABX24307"/>
    </conflict>
</comment>